<reference key="1">
    <citation type="submission" date="2007-09" db="EMBL/GenBank/DDBJ databases">
        <title>Complete genome sequence of Rickettsia rickettsii.</title>
        <authorList>
            <person name="Madan A."/>
            <person name="Fahey J."/>
            <person name="Helton E."/>
            <person name="Ketteman M."/>
            <person name="Madan A."/>
            <person name="Rodrigues S."/>
            <person name="Sanchez A."/>
            <person name="Dasch G."/>
            <person name="Eremeeva M."/>
        </authorList>
    </citation>
    <scope>NUCLEOTIDE SEQUENCE [LARGE SCALE GENOMIC DNA]</scope>
    <source>
        <strain>Sheila Smith</strain>
    </source>
</reference>
<name>RF1_RICRS</name>
<gene>
    <name evidence="1" type="primary">prfA</name>
    <name type="ordered locus">A1G_03940</name>
</gene>
<sequence length="355" mass="39730">MRFSDNLAKILDKYENLGNKLSSGIMGDEFVKASKEYAELEDVVAKIKEYNKAKSELEEANNFKLEVGLDNATLEMIEDEIYTLENSLPKLERAVKIALLPKDDADSKSAIIEVRAGSGGEEAALFAAVLFNMYQRYAELKGWRFEILAISDTGIGGYKEASASIKGKDVFSKLKFESGVHRVQRVPETESQGRIHTSAATVAVLPEAEEVDIKIEDKDLRIDTYRASGAGGQHVNTTDSAVRITHIPTGITVALQDEKSQHKNKAKALKILRARIYEEERRKKEQARADSRRGQVGSGDRSERIRTYNFPQGRVSDHRIHLTLYKIDEVVKNGQLDEFVEALIADDEAKKLLEI</sequence>
<keyword id="KW-0963">Cytoplasm</keyword>
<keyword id="KW-0488">Methylation</keyword>
<keyword id="KW-0648">Protein biosynthesis</keyword>
<evidence type="ECO:0000255" key="1">
    <source>
        <dbReference type="HAMAP-Rule" id="MF_00093"/>
    </source>
</evidence>
<evidence type="ECO:0000256" key="2">
    <source>
        <dbReference type="SAM" id="MobiDB-lite"/>
    </source>
</evidence>
<proteinExistence type="inferred from homology"/>
<organism>
    <name type="scientific">Rickettsia rickettsii (strain Sheila Smith)</name>
    <dbReference type="NCBI Taxonomy" id="392021"/>
    <lineage>
        <taxon>Bacteria</taxon>
        <taxon>Pseudomonadati</taxon>
        <taxon>Pseudomonadota</taxon>
        <taxon>Alphaproteobacteria</taxon>
        <taxon>Rickettsiales</taxon>
        <taxon>Rickettsiaceae</taxon>
        <taxon>Rickettsieae</taxon>
        <taxon>Rickettsia</taxon>
        <taxon>spotted fever group</taxon>
    </lineage>
</organism>
<accession>A8GSC7</accession>
<protein>
    <recommendedName>
        <fullName evidence="1">Peptide chain release factor 1</fullName>
        <shortName evidence="1">RF-1</shortName>
    </recommendedName>
</protein>
<comment type="function">
    <text evidence="1">Peptide chain release factor 1 directs the termination of translation in response to the peptide chain termination codons UAG and UAA.</text>
</comment>
<comment type="subcellular location">
    <subcellularLocation>
        <location evidence="1">Cytoplasm</location>
    </subcellularLocation>
</comment>
<comment type="PTM">
    <text evidence="1">Methylated by PrmC. Methylation increases the termination efficiency of RF1.</text>
</comment>
<comment type="similarity">
    <text evidence="1">Belongs to the prokaryotic/mitochondrial release factor family.</text>
</comment>
<dbReference type="EMBL" id="CP000848">
    <property type="protein sequence ID" value="ABV76302.1"/>
    <property type="molecule type" value="Genomic_DNA"/>
</dbReference>
<dbReference type="RefSeq" id="WP_012150880.1">
    <property type="nucleotide sequence ID" value="NZ_CP121767.1"/>
</dbReference>
<dbReference type="SMR" id="A8GSC7"/>
<dbReference type="GeneID" id="79937424"/>
<dbReference type="KEGG" id="rri:A1G_03940"/>
<dbReference type="HOGENOM" id="CLU_036856_0_1_5"/>
<dbReference type="Proteomes" id="UP000006832">
    <property type="component" value="Chromosome"/>
</dbReference>
<dbReference type="GO" id="GO:0005737">
    <property type="term" value="C:cytoplasm"/>
    <property type="evidence" value="ECO:0007669"/>
    <property type="project" value="UniProtKB-SubCell"/>
</dbReference>
<dbReference type="GO" id="GO:0016149">
    <property type="term" value="F:translation release factor activity, codon specific"/>
    <property type="evidence" value="ECO:0007669"/>
    <property type="project" value="UniProtKB-UniRule"/>
</dbReference>
<dbReference type="FunFam" id="3.30.160.20:FF:000004">
    <property type="entry name" value="Peptide chain release factor 1"/>
    <property type="match status" value="1"/>
</dbReference>
<dbReference type="FunFam" id="3.30.70.1660:FF:000002">
    <property type="entry name" value="Peptide chain release factor 1"/>
    <property type="match status" value="1"/>
</dbReference>
<dbReference type="FunFam" id="3.30.70.1660:FF:000004">
    <property type="entry name" value="Peptide chain release factor 1"/>
    <property type="match status" value="1"/>
</dbReference>
<dbReference type="Gene3D" id="3.30.160.20">
    <property type="match status" value="1"/>
</dbReference>
<dbReference type="Gene3D" id="3.30.70.1660">
    <property type="match status" value="1"/>
</dbReference>
<dbReference type="Gene3D" id="6.10.140.1950">
    <property type="match status" value="1"/>
</dbReference>
<dbReference type="HAMAP" id="MF_00093">
    <property type="entry name" value="Rel_fac_1"/>
    <property type="match status" value="1"/>
</dbReference>
<dbReference type="InterPro" id="IPR005139">
    <property type="entry name" value="PCRF"/>
</dbReference>
<dbReference type="InterPro" id="IPR000352">
    <property type="entry name" value="Pep_chain_release_fac_I"/>
</dbReference>
<dbReference type="InterPro" id="IPR045853">
    <property type="entry name" value="Pep_chain_release_fac_I_sf"/>
</dbReference>
<dbReference type="InterPro" id="IPR050057">
    <property type="entry name" value="Prokaryotic/Mito_RF"/>
</dbReference>
<dbReference type="InterPro" id="IPR004373">
    <property type="entry name" value="RF-1"/>
</dbReference>
<dbReference type="NCBIfam" id="TIGR00019">
    <property type="entry name" value="prfA"/>
    <property type="match status" value="1"/>
</dbReference>
<dbReference type="NCBIfam" id="NF001859">
    <property type="entry name" value="PRK00591.1"/>
    <property type="match status" value="1"/>
</dbReference>
<dbReference type="PANTHER" id="PTHR43804">
    <property type="entry name" value="LD18447P"/>
    <property type="match status" value="1"/>
</dbReference>
<dbReference type="PANTHER" id="PTHR43804:SF7">
    <property type="entry name" value="LD18447P"/>
    <property type="match status" value="1"/>
</dbReference>
<dbReference type="Pfam" id="PF03462">
    <property type="entry name" value="PCRF"/>
    <property type="match status" value="1"/>
</dbReference>
<dbReference type="Pfam" id="PF00472">
    <property type="entry name" value="RF-1"/>
    <property type="match status" value="1"/>
</dbReference>
<dbReference type="SMART" id="SM00937">
    <property type="entry name" value="PCRF"/>
    <property type="match status" value="1"/>
</dbReference>
<dbReference type="SUPFAM" id="SSF75620">
    <property type="entry name" value="Release factor"/>
    <property type="match status" value="1"/>
</dbReference>
<dbReference type="PROSITE" id="PS00745">
    <property type="entry name" value="RF_PROK_I"/>
    <property type="match status" value="1"/>
</dbReference>
<feature type="chain" id="PRO_1000004944" description="Peptide chain release factor 1">
    <location>
        <begin position="1"/>
        <end position="355"/>
    </location>
</feature>
<feature type="region of interest" description="Disordered" evidence="2">
    <location>
        <begin position="282"/>
        <end position="305"/>
    </location>
</feature>
<feature type="compositionally biased region" description="Basic and acidic residues" evidence="2">
    <location>
        <begin position="282"/>
        <end position="293"/>
    </location>
</feature>
<feature type="modified residue" description="N5-methylglutamine" evidence="1">
    <location>
        <position position="233"/>
    </location>
</feature>